<name>TPIP1_HUMAN</name>
<organism>
    <name type="scientific">Homo sapiens</name>
    <name type="common">Human</name>
    <dbReference type="NCBI Taxonomy" id="9606"/>
    <lineage>
        <taxon>Eukaryota</taxon>
        <taxon>Metazoa</taxon>
        <taxon>Chordata</taxon>
        <taxon>Craniata</taxon>
        <taxon>Vertebrata</taxon>
        <taxon>Euteleostomi</taxon>
        <taxon>Mammalia</taxon>
        <taxon>Eutheria</taxon>
        <taxon>Euarchontoglires</taxon>
        <taxon>Primates</taxon>
        <taxon>Haplorrhini</taxon>
        <taxon>Catarrhini</taxon>
        <taxon>Hominidae</taxon>
        <taxon>Homo</taxon>
    </lineage>
</organism>
<evidence type="ECO:0000256" key="1">
    <source>
        <dbReference type="SAM" id="MobiDB-lite"/>
    </source>
</evidence>
<evidence type="ECO:0000269" key="2">
    <source>
    </source>
</evidence>
<evidence type="ECO:0000269" key="3">
    <source>
    </source>
</evidence>
<evidence type="ECO:0000303" key="4">
    <source>
    </source>
</evidence>
<evidence type="ECO:0000303" key="5">
    <source>
    </source>
</evidence>
<evidence type="ECO:0000303" key="6">
    <source ref="2"/>
</evidence>
<evidence type="ECO:0000305" key="7"/>
<comment type="function">
    <text evidence="2">May play an important role in mediating p53/TP53-dependent apoptosis.</text>
</comment>
<comment type="subcellular location">
    <subcellularLocation>
        <location evidence="2">Mitochondrion</location>
    </subcellularLocation>
</comment>
<comment type="alternative products">
    <event type="alternative splicing"/>
    <isoform>
        <id>Q9HCN2-1</id>
        <name>1</name>
        <name>Alpha</name>
        <sequence type="displayed"/>
    </isoform>
    <isoform>
        <id>Q9HCN2-2</id>
        <name>2</name>
        <name>Beta</name>
        <sequence type="described" ref="VSP_027866 VSP_027867"/>
    </isoform>
    <isoform>
        <id>Q9HCN2-3</id>
        <name>3</name>
        <name>Gamma</name>
        <sequence type="described" ref="VSP_027865"/>
    </isoform>
    <isoform>
        <id>Q9HCN2-4</id>
        <name>4</name>
        <sequence type="described" ref="VSP_027868"/>
    </isoform>
</comment>
<comment type="tissue specificity">
    <text evidence="2">Only found to be expressed in thymus.</text>
</comment>
<comment type="induction">
    <text evidence="2">By p53/TP53.</text>
</comment>
<comment type="miscellaneous">
    <molecule>Isoform 3</molecule>
    <text evidence="7">Dubious isoform. Could be a cloning artifact.</text>
</comment>
<reference key="1">
    <citation type="journal article" date="2000" name="Cell">
        <title>p53AIP1, a potential mediator of p53-dependent apoptosis, and its regulation by Ser-46-phosphorylated p53.</title>
        <authorList>
            <person name="Oda K."/>
            <person name="Arakawa H."/>
            <person name="Tanaka T."/>
            <person name="Matsuda K."/>
            <person name="Tanikawa C."/>
            <person name="Mori T."/>
            <person name="Nishimori H."/>
            <person name="Tamai K."/>
            <person name="Tokino T."/>
            <person name="Nakamura Y."/>
            <person name="Taya Y."/>
        </authorList>
    </citation>
    <scope>NUCLEOTIDE SEQUENCE [MRNA] (ISOFORMS 1; 2 AND 3)</scope>
    <scope>FUNCTION</scope>
    <scope>SUBCELLULAR LOCATION</scope>
    <scope>TISSUE SPECIFICITY</scope>
    <scope>INDUCTION</scope>
</reference>
<reference key="2">
    <citation type="submission" date="2003-05" db="EMBL/GenBank/DDBJ databases">
        <authorList>
            <person name="Zhou G."/>
            <person name="Xiao W."/>
            <person name="Li H."/>
            <person name="Shen C."/>
            <person name="Zhong G."/>
            <person name="Yu R."/>
            <person name="Lin L."/>
            <person name="Yang S."/>
        </authorList>
    </citation>
    <scope>NUCLEOTIDE SEQUENCE [MRNA] (ISOFORM 4)</scope>
</reference>
<reference key="3">
    <citation type="journal article" date="2006" name="Nature">
        <title>Human chromosome 11 DNA sequence and analysis including novel gene identification.</title>
        <authorList>
            <person name="Taylor T.D."/>
            <person name="Noguchi H."/>
            <person name="Totoki Y."/>
            <person name="Toyoda A."/>
            <person name="Kuroki Y."/>
            <person name="Dewar K."/>
            <person name="Lloyd C."/>
            <person name="Itoh T."/>
            <person name="Takeda T."/>
            <person name="Kim D.-W."/>
            <person name="She X."/>
            <person name="Barlow K.F."/>
            <person name="Bloom T."/>
            <person name="Bruford E."/>
            <person name="Chang J.L."/>
            <person name="Cuomo C.A."/>
            <person name="Eichler E."/>
            <person name="FitzGerald M.G."/>
            <person name="Jaffe D.B."/>
            <person name="LaButti K."/>
            <person name="Nicol R."/>
            <person name="Park H.-S."/>
            <person name="Seaman C."/>
            <person name="Sougnez C."/>
            <person name="Yang X."/>
            <person name="Zimmer A.R."/>
            <person name="Zody M.C."/>
            <person name="Birren B.W."/>
            <person name="Nusbaum C."/>
            <person name="Fujiyama A."/>
            <person name="Hattori M."/>
            <person name="Rogers J."/>
            <person name="Lander E.S."/>
            <person name="Sakaki Y."/>
        </authorList>
    </citation>
    <scope>NUCLEOTIDE SEQUENCE [LARGE SCALE GENOMIC DNA]</scope>
</reference>
<reference key="4">
    <citation type="journal article" date="2004" name="Genome Res.">
        <title>The status, quality, and expansion of the NIH full-length cDNA project: the Mammalian Gene Collection (MGC).</title>
        <authorList>
            <consortium name="The MGC Project Team"/>
        </authorList>
    </citation>
    <scope>NUCLEOTIDE SEQUENCE [LARGE SCALE MRNA] (ISOFORM 3)</scope>
    <scope>VARIANT VAL-7</scope>
</reference>
<accession>Q9HCN2</accession>
<accession>Q6NT40</accession>
<accession>Q7Z6F7</accession>
<accession>Q9HCN0</accession>
<accession>Q9HCN1</accession>
<gene>
    <name type="primary">TP53AIP1</name>
</gene>
<sequence length="124" mass="12935">MGSSSEASFRSAQASCSGARRQGLGRGDQNLSVMPPNGRAQTHTPGWVSDPLVLGAQVHGGCRGIEALSVSSGSWSSATVWILTGLGLGLSRPFLPGATVLRDRPLGSAFELSYDQKKAPLRLQ</sequence>
<dbReference type="EMBL" id="AB045830">
    <property type="protein sequence ID" value="BAB16421.1"/>
    <property type="molecule type" value="mRNA"/>
</dbReference>
<dbReference type="EMBL" id="AB045831">
    <property type="protein sequence ID" value="BAB16422.1"/>
    <property type="molecule type" value="mRNA"/>
</dbReference>
<dbReference type="EMBL" id="AB045832">
    <property type="protein sequence ID" value="BAB16423.1"/>
    <property type="molecule type" value="mRNA"/>
</dbReference>
<dbReference type="EMBL" id="AY302135">
    <property type="protein sequence ID" value="AAP57627.1"/>
    <property type="molecule type" value="mRNA"/>
</dbReference>
<dbReference type="EMBL" id="AP000920">
    <property type="status" value="NOT_ANNOTATED_CDS"/>
    <property type="molecule type" value="Genomic_DNA"/>
</dbReference>
<dbReference type="EMBL" id="BC069399">
    <property type="protein sequence ID" value="AAH69399.1"/>
    <property type="molecule type" value="mRNA"/>
</dbReference>
<dbReference type="EMBL" id="BC069426">
    <property type="protein sequence ID" value="AAH69426.1"/>
    <property type="molecule type" value="mRNA"/>
</dbReference>
<dbReference type="CCDS" id="CCDS55797.1">
    <molecule id="Q9HCN2-2"/>
</dbReference>
<dbReference type="CCDS" id="CCDS55798.1">
    <molecule id="Q9HCN2-4"/>
</dbReference>
<dbReference type="CCDS" id="CCDS58195.1">
    <molecule id="Q9HCN2-3"/>
</dbReference>
<dbReference type="CCDS" id="CCDS8480.2">
    <molecule id="Q9HCN2-1"/>
</dbReference>
<dbReference type="RefSeq" id="NP_001182123.1">
    <molecule id="Q9HCN2-4"/>
    <property type="nucleotide sequence ID" value="NM_001195194.1"/>
</dbReference>
<dbReference type="RefSeq" id="NP_001182124.1">
    <molecule id="Q9HCN2-2"/>
    <property type="nucleotide sequence ID" value="NM_001195195.2"/>
</dbReference>
<dbReference type="RefSeq" id="NP_001238893.1">
    <molecule id="Q9HCN2-3"/>
    <property type="nucleotide sequence ID" value="NM_001251964.2"/>
</dbReference>
<dbReference type="RefSeq" id="NP_071395.2">
    <molecule id="Q9HCN2-1"/>
    <property type="nucleotide sequence ID" value="NM_022112.3"/>
</dbReference>
<dbReference type="RefSeq" id="XP_016873605.1">
    <molecule id="Q9HCN2-1"/>
    <property type="nucleotide sequence ID" value="XM_017018116.2"/>
</dbReference>
<dbReference type="RefSeq" id="XP_054225594.1">
    <molecule id="Q9HCN2-1"/>
    <property type="nucleotide sequence ID" value="XM_054369619.1"/>
</dbReference>
<dbReference type="BioGRID" id="122018">
    <property type="interactions" value="2"/>
</dbReference>
<dbReference type="FunCoup" id="Q9HCN2">
    <property type="interactions" value="191"/>
</dbReference>
<dbReference type="IntAct" id="Q9HCN2">
    <property type="interactions" value="1"/>
</dbReference>
<dbReference type="STRING" id="9606.ENSP00000432743"/>
<dbReference type="iPTMnet" id="Q9HCN2"/>
<dbReference type="PhosphoSitePlus" id="Q9HCN2"/>
<dbReference type="BioMuta" id="TP53AIP1"/>
<dbReference type="MassIVE" id="Q9HCN2"/>
<dbReference type="PaxDb" id="9606-ENSP00000432743"/>
<dbReference type="Antibodypedia" id="33030">
    <property type="antibodies" value="155 antibodies from 26 providers"/>
</dbReference>
<dbReference type="DNASU" id="63970"/>
<dbReference type="Ensembl" id="ENST00000458238.6">
    <molecule id="Q9HCN2-2"/>
    <property type="protein sequence ID" value="ENSP00000390694.2"/>
    <property type="gene ID" value="ENSG00000120471.16"/>
</dbReference>
<dbReference type="Ensembl" id="ENST00000527504.1">
    <molecule id="Q9HCN2-3"/>
    <property type="protein sequence ID" value="ENSP00000435175.1"/>
    <property type="gene ID" value="ENSG00000120471.16"/>
</dbReference>
<dbReference type="Ensembl" id="ENST00000530777.5">
    <molecule id="Q9HCN2-4"/>
    <property type="protein sequence ID" value="ENSP00000432908.1"/>
    <property type="gene ID" value="ENSG00000120471.16"/>
</dbReference>
<dbReference type="Ensembl" id="ENST00000531399.6">
    <molecule id="Q9HCN2-1"/>
    <property type="protein sequence ID" value="ENSP00000432743.1"/>
    <property type="gene ID" value="ENSG00000120471.16"/>
</dbReference>
<dbReference type="Ensembl" id="ENST00000602346.5">
    <molecule id="Q9HCN2-3"/>
    <property type="protein sequence ID" value="ENSP00000473353.1"/>
    <property type="gene ID" value="ENSG00000120471.16"/>
</dbReference>
<dbReference type="GeneID" id="63970"/>
<dbReference type="KEGG" id="hsa:63970"/>
<dbReference type="MANE-Select" id="ENST00000531399.6">
    <property type="protein sequence ID" value="ENSP00000432743.1"/>
    <property type="RefSeq nucleotide sequence ID" value="NM_022112.3"/>
    <property type="RefSeq protein sequence ID" value="NP_071395.2"/>
</dbReference>
<dbReference type="UCSC" id="uc001qex.5">
    <molecule id="Q9HCN2-1"/>
    <property type="organism name" value="human"/>
</dbReference>
<dbReference type="AGR" id="HGNC:29984"/>
<dbReference type="CTD" id="63970"/>
<dbReference type="DisGeNET" id="63970"/>
<dbReference type="GeneCards" id="TP53AIP1"/>
<dbReference type="HGNC" id="HGNC:29984">
    <property type="gene designation" value="TP53AIP1"/>
</dbReference>
<dbReference type="HPA" id="ENSG00000120471">
    <property type="expression patterns" value="Tissue enhanced (esophagus, lymphoid tissue, skin, vagina)"/>
</dbReference>
<dbReference type="MIM" id="605426">
    <property type="type" value="gene"/>
</dbReference>
<dbReference type="neXtProt" id="NX_Q9HCN2"/>
<dbReference type="OpenTargets" id="ENSG00000120471"/>
<dbReference type="PharmGKB" id="PA164726680"/>
<dbReference type="VEuPathDB" id="HostDB:ENSG00000120471"/>
<dbReference type="eggNOG" id="ENOG502TM39">
    <property type="taxonomic scope" value="Eukaryota"/>
</dbReference>
<dbReference type="GeneTree" id="ENSGT00390000000643"/>
<dbReference type="HOGENOM" id="CLU_2497229_0_0_1"/>
<dbReference type="InParanoid" id="Q9HCN2"/>
<dbReference type="OMA" id="TVWCLTD"/>
<dbReference type="OrthoDB" id="9538752at2759"/>
<dbReference type="PAN-GO" id="Q9HCN2">
    <property type="GO annotations" value="0 GO annotations based on evolutionary models"/>
</dbReference>
<dbReference type="PhylomeDB" id="Q9HCN2"/>
<dbReference type="PathwayCommons" id="Q9HCN2"/>
<dbReference type="Reactome" id="R-HSA-6803204">
    <property type="pathway name" value="TP53 Regulates Transcription of Genes Involved in Cytochrome C Release"/>
</dbReference>
<dbReference type="SignaLink" id="Q9HCN2"/>
<dbReference type="BioGRID-ORCS" id="63970">
    <property type="hits" value="8 hits in 1145 CRISPR screens"/>
</dbReference>
<dbReference type="ChiTaRS" id="TP53AIP1">
    <property type="organism name" value="human"/>
</dbReference>
<dbReference type="GeneWiki" id="P53AIP1"/>
<dbReference type="GenomeRNAi" id="63970"/>
<dbReference type="Pharos" id="Q9HCN2">
    <property type="development level" value="Tbio"/>
</dbReference>
<dbReference type="PRO" id="PR:Q9HCN2"/>
<dbReference type="Proteomes" id="UP000005640">
    <property type="component" value="Chromosome 11"/>
</dbReference>
<dbReference type="RNAct" id="Q9HCN2">
    <property type="molecule type" value="protein"/>
</dbReference>
<dbReference type="Bgee" id="ENSG00000120471">
    <property type="expression patterns" value="Expressed in buccal mucosa cell and 123 other cell types or tissues"/>
</dbReference>
<dbReference type="GO" id="GO:0005759">
    <property type="term" value="C:mitochondrial matrix"/>
    <property type="evidence" value="ECO:0000304"/>
    <property type="project" value="Reactome"/>
</dbReference>
<dbReference type="GO" id="GO:0005739">
    <property type="term" value="C:mitochondrion"/>
    <property type="evidence" value="ECO:0000304"/>
    <property type="project" value="UniProtKB"/>
</dbReference>
<dbReference type="GO" id="GO:0006915">
    <property type="term" value="P:apoptotic process"/>
    <property type="evidence" value="ECO:0000304"/>
    <property type="project" value="UniProtKB"/>
</dbReference>
<dbReference type="InterPro" id="IPR029284">
    <property type="entry name" value="TP53AIP1"/>
</dbReference>
<dbReference type="Pfam" id="PF15338">
    <property type="entry name" value="TPIP1"/>
    <property type="match status" value="1"/>
</dbReference>
<protein>
    <recommendedName>
        <fullName>p53-regulated apoptosis-inducing protein 1</fullName>
        <shortName>p53AIP1</shortName>
    </recommendedName>
</protein>
<keyword id="KW-0025">Alternative splicing</keyword>
<keyword id="KW-0053">Apoptosis</keyword>
<keyword id="KW-0496">Mitochondrion</keyword>
<keyword id="KW-1185">Reference proteome</keyword>
<proteinExistence type="evidence at transcript level"/>
<feature type="chain" id="PRO_0000300813" description="p53-regulated apoptosis-inducing protein 1">
    <location>
        <begin position="1"/>
        <end position="124"/>
    </location>
</feature>
<feature type="region of interest" description="Disordered" evidence="1">
    <location>
        <begin position="1"/>
        <end position="46"/>
    </location>
</feature>
<feature type="compositionally biased region" description="Polar residues" evidence="1">
    <location>
        <begin position="1"/>
        <end position="16"/>
    </location>
</feature>
<feature type="splice variant" id="VSP_027865" description="In isoform 3." evidence="4 5">
    <original>DPLVLGAQVHGGCRGIEALSVSSGSWSSATVWILTGLGLGLSRPFLPGATVLRDRPLGSAFELSYDQKKAPLRLQ</original>
    <variation>PCSENRDGLLPATAPGRLCSHRGADIPSFQTHQDPVTASGSSELHADCPQFRALDRAGN</variation>
    <location>
        <begin position="50"/>
        <end position="124"/>
    </location>
</feature>
<feature type="splice variant" id="VSP_027866" description="In isoform 2." evidence="4">
    <original>GL</original>
    <variation>VQ</variation>
    <location>
        <begin position="85"/>
        <end position="86"/>
    </location>
</feature>
<feature type="splice variant" id="VSP_027868" description="In isoform 4." evidence="6">
    <location>
        <begin position="86"/>
        <end position="89"/>
    </location>
</feature>
<feature type="splice variant" id="VSP_027867" description="In isoform 2." evidence="4">
    <location>
        <begin position="87"/>
        <end position="124"/>
    </location>
</feature>
<feature type="sequence variant" id="VAR_059735" description="In dbSNP:rs35942033." evidence="3">
    <original>A</original>
    <variation>V</variation>
    <location>
        <position position="7"/>
    </location>
</feature>